<proteinExistence type="inferred from homology"/>
<organism>
    <name type="scientific">Tropheryma whipplei (strain Twist)</name>
    <name type="common">Whipple's bacillus</name>
    <dbReference type="NCBI Taxonomy" id="203267"/>
    <lineage>
        <taxon>Bacteria</taxon>
        <taxon>Bacillati</taxon>
        <taxon>Actinomycetota</taxon>
        <taxon>Actinomycetes</taxon>
        <taxon>Micrococcales</taxon>
        <taxon>Tropherymataceae</taxon>
        <taxon>Tropheryma</taxon>
    </lineage>
</organism>
<protein>
    <recommendedName>
        <fullName evidence="1">Beta-ketoacyl-[acyl-carrier-protein] synthase III</fullName>
        <shortName evidence="1">Beta-ketoacyl-ACP synthase III</shortName>
        <shortName evidence="1">KAS III</shortName>
        <ecNumber evidence="1">2.3.1.180</ecNumber>
    </recommendedName>
    <alternativeName>
        <fullName evidence="1">3-oxoacyl-[acyl-carrier-protein] synthase 3</fullName>
    </alternativeName>
    <alternativeName>
        <fullName evidence="1">3-oxoacyl-[acyl-carrier-protein] synthase III</fullName>
    </alternativeName>
</protein>
<comment type="function">
    <text evidence="1">Catalyzes the condensation reaction of fatty acid synthesis by the addition to an acyl acceptor of two carbons from malonyl-ACP. Catalyzes the first condensation reaction which initiates fatty acid synthesis and may therefore play a role in governing the total rate of fatty acid production. Possesses both acetoacetyl-ACP synthase and acetyl transacylase activities. Its substrate specificity determines the biosynthesis of branched-chain and/or straight-chain of fatty acids.</text>
</comment>
<comment type="catalytic activity">
    <reaction evidence="1">
        <text>malonyl-[ACP] + acetyl-CoA + H(+) = 3-oxobutanoyl-[ACP] + CO2 + CoA</text>
        <dbReference type="Rhea" id="RHEA:12080"/>
        <dbReference type="Rhea" id="RHEA-COMP:9623"/>
        <dbReference type="Rhea" id="RHEA-COMP:9625"/>
        <dbReference type="ChEBI" id="CHEBI:15378"/>
        <dbReference type="ChEBI" id="CHEBI:16526"/>
        <dbReference type="ChEBI" id="CHEBI:57287"/>
        <dbReference type="ChEBI" id="CHEBI:57288"/>
        <dbReference type="ChEBI" id="CHEBI:78449"/>
        <dbReference type="ChEBI" id="CHEBI:78450"/>
        <dbReference type="EC" id="2.3.1.180"/>
    </reaction>
</comment>
<comment type="pathway">
    <text evidence="1">Lipid metabolism; fatty acid biosynthesis.</text>
</comment>
<comment type="subunit">
    <text evidence="1">Homodimer.</text>
</comment>
<comment type="subcellular location">
    <subcellularLocation>
        <location evidence="1">Cytoplasm</location>
    </subcellularLocation>
</comment>
<comment type="domain">
    <text evidence="1">The last Arg residue of the ACP-binding site is essential for the weak association between ACP/AcpP and FabH.</text>
</comment>
<comment type="similarity">
    <text evidence="2">Belongs to the thiolase-like superfamily. FabH family.</text>
</comment>
<comment type="sequence caution" evidence="2">
    <conflict type="erroneous initiation">
        <sequence resource="EMBL-CDS" id="AAO44350"/>
    </conflict>
</comment>
<evidence type="ECO:0000250" key="1"/>
<evidence type="ECO:0000305" key="2"/>
<feature type="chain" id="PRO_0000110500" description="Beta-ketoacyl-[acyl-carrier-protein] synthase III">
    <location>
        <begin position="1"/>
        <end position="322"/>
    </location>
</feature>
<feature type="region of interest" description="ACP-binding" evidence="1">
    <location>
        <begin position="248"/>
        <end position="252"/>
    </location>
</feature>
<feature type="active site" evidence="1">
    <location>
        <position position="113"/>
    </location>
</feature>
<feature type="active site" evidence="1">
    <location>
        <position position="247"/>
    </location>
</feature>
<feature type="active site" evidence="1">
    <location>
        <position position="278"/>
    </location>
</feature>
<reference key="1">
    <citation type="journal article" date="2003" name="Genome Res.">
        <title>Tropheryma whipplei twist: a human pathogenic Actinobacteria with a reduced genome.</title>
        <authorList>
            <person name="Raoult D."/>
            <person name="Ogata H."/>
            <person name="Audic S."/>
            <person name="Robert C."/>
            <person name="Suhre K."/>
            <person name="Drancourt M."/>
            <person name="Claverie J.-M."/>
        </authorList>
    </citation>
    <scope>NUCLEOTIDE SEQUENCE [LARGE SCALE GENOMIC DNA]</scope>
    <source>
        <strain>Twist</strain>
    </source>
</reference>
<gene>
    <name evidence="1" type="primary">fabH</name>
    <name type="ordered locus">TWT_253</name>
</gene>
<accession>P64116</accession>
<accession>Q83HL5</accession>
<accession>Q83N01</accession>
<sequence length="322" mass="34211">MRYSKIVSLGAYRGERDVYNDELIGPINSSDEWIRRRTGIISRKRALSGTTVVDMAYAASKEALNDAQMRPEDIDLILVATITHFGHTPSVAAHVGFRIGVQDAILLDINAACAGFSYAIFQADLMIKSGVASRALVIGVDKLSEFIDPLDRTISFLLADGAGAAILVGSTSMGIGKTVCGGNPGQLESVGLTGSTTDVKSGSAWPTLRQEGSSIFRWAVWQMAKVAKQILDINQVQPGDLNAFIPHQANIRIIDELAKQIGLEENVLIAQDICKTGNTSSASIPLAMHSLIKGNPSLSGELALQIGFGAGLVYAGQTVVMP</sequence>
<dbReference type="EC" id="2.3.1.180" evidence="1"/>
<dbReference type="EMBL" id="AE014184">
    <property type="protein sequence ID" value="AAO44350.1"/>
    <property type="status" value="ALT_INIT"/>
    <property type="molecule type" value="Genomic_DNA"/>
</dbReference>
<dbReference type="SMR" id="P64116"/>
<dbReference type="STRING" id="203267.TWT_253"/>
<dbReference type="KEGG" id="twh:TWT_253"/>
<dbReference type="eggNOG" id="COG0332">
    <property type="taxonomic scope" value="Bacteria"/>
</dbReference>
<dbReference type="HOGENOM" id="CLU_039592_4_0_11"/>
<dbReference type="UniPathway" id="UPA00094"/>
<dbReference type="Proteomes" id="UP000002200">
    <property type="component" value="Chromosome"/>
</dbReference>
<dbReference type="GO" id="GO:0005737">
    <property type="term" value="C:cytoplasm"/>
    <property type="evidence" value="ECO:0007669"/>
    <property type="project" value="UniProtKB-SubCell"/>
</dbReference>
<dbReference type="GO" id="GO:0004315">
    <property type="term" value="F:3-oxoacyl-[acyl-carrier-protein] synthase activity"/>
    <property type="evidence" value="ECO:0007669"/>
    <property type="project" value="InterPro"/>
</dbReference>
<dbReference type="GO" id="GO:0033818">
    <property type="term" value="F:beta-ketoacyl-acyl-carrier-protein synthase III activity"/>
    <property type="evidence" value="ECO:0007669"/>
    <property type="project" value="UniProtKB-EC"/>
</dbReference>
<dbReference type="GO" id="GO:0006633">
    <property type="term" value="P:fatty acid biosynthetic process"/>
    <property type="evidence" value="ECO:0007669"/>
    <property type="project" value="UniProtKB-UniPathway"/>
</dbReference>
<dbReference type="CDD" id="cd00830">
    <property type="entry name" value="KAS_III"/>
    <property type="match status" value="1"/>
</dbReference>
<dbReference type="Gene3D" id="3.40.47.10">
    <property type="match status" value="2"/>
</dbReference>
<dbReference type="InterPro" id="IPR013747">
    <property type="entry name" value="ACP_syn_III_C"/>
</dbReference>
<dbReference type="InterPro" id="IPR013751">
    <property type="entry name" value="ACP_syn_III_N"/>
</dbReference>
<dbReference type="InterPro" id="IPR016039">
    <property type="entry name" value="Thiolase-like"/>
</dbReference>
<dbReference type="NCBIfam" id="NF006829">
    <property type="entry name" value="PRK09352.1"/>
    <property type="match status" value="1"/>
</dbReference>
<dbReference type="PANTHER" id="PTHR43091">
    <property type="entry name" value="3-OXOACYL-[ACYL-CARRIER-PROTEIN] SYNTHASE"/>
    <property type="match status" value="1"/>
</dbReference>
<dbReference type="PANTHER" id="PTHR43091:SF1">
    <property type="entry name" value="BETA-KETOACYL-[ACYL-CARRIER-PROTEIN] SYNTHASE III, CHLOROPLASTIC"/>
    <property type="match status" value="1"/>
</dbReference>
<dbReference type="Pfam" id="PF08545">
    <property type="entry name" value="ACP_syn_III"/>
    <property type="match status" value="1"/>
</dbReference>
<dbReference type="Pfam" id="PF08541">
    <property type="entry name" value="ACP_syn_III_C"/>
    <property type="match status" value="1"/>
</dbReference>
<dbReference type="SUPFAM" id="SSF53901">
    <property type="entry name" value="Thiolase-like"/>
    <property type="match status" value="1"/>
</dbReference>
<keyword id="KW-0012">Acyltransferase</keyword>
<keyword id="KW-0963">Cytoplasm</keyword>
<keyword id="KW-0275">Fatty acid biosynthesis</keyword>
<keyword id="KW-0276">Fatty acid metabolism</keyword>
<keyword id="KW-0444">Lipid biosynthesis</keyword>
<keyword id="KW-0443">Lipid metabolism</keyword>
<keyword id="KW-0511">Multifunctional enzyme</keyword>
<keyword id="KW-1185">Reference proteome</keyword>
<keyword id="KW-0808">Transferase</keyword>
<name>FABH_TROWT</name>